<accession>Q9LU40</accession>
<accession>Q8LA51</accession>
<protein>
    <recommendedName>
        <fullName evidence="3">Protein MANNAN SYNTHESIS-RELATED 1</fullName>
        <shortName evidence="3">AtMSR1</shortName>
        <ecNumber evidence="4">2.4.1.-</ecNumber>
    </recommendedName>
    <alternativeName>
        <fullName evidence="4">O-fucosyltransferase 25</fullName>
        <shortName evidence="4">O-FucT-25</shortName>
    </alternativeName>
    <alternativeName>
        <fullName evidence="6">O-fucosyltransferase family protein</fullName>
    </alternativeName>
</protein>
<proteinExistence type="evidence at transcript level"/>
<comment type="function">
    <text evidence="2">Glycosyltransferase involved in mannan biosynthesis.</text>
</comment>
<comment type="pathway">
    <text evidence="4">Glycan biosynthesis.</text>
</comment>
<comment type="subcellular location">
    <subcellularLocation>
        <location evidence="2">Golgi apparatus membrane</location>
        <topology evidence="4">Single-pass type II membrane protein</topology>
    </subcellularLocation>
</comment>
<comment type="tissue specificity">
    <text evidence="2">Widely expressed.</text>
</comment>
<comment type="disruption phenotype">
    <text evidence="2">Decreased of mannosyl levels due to a reduction of glucomannan content.</text>
</comment>
<comment type="similarity">
    <text evidence="4">Belongs to the glycosyltransferase GT106 family.</text>
</comment>
<gene>
    <name evidence="3 6" type="primary">MSR1</name>
    <name evidence="4" type="synonym">OFUT25</name>
    <name evidence="5" type="ordered locus">At3g21190</name>
    <name evidence="7" type="ORF">MXL8.4</name>
</gene>
<evidence type="ECO:0000250" key="1">
    <source>
        <dbReference type="UniProtKB" id="Q9H488"/>
    </source>
</evidence>
<evidence type="ECO:0000269" key="2">
    <source>
    </source>
</evidence>
<evidence type="ECO:0000303" key="3">
    <source>
    </source>
</evidence>
<evidence type="ECO:0000305" key="4"/>
<evidence type="ECO:0000312" key="5">
    <source>
        <dbReference type="Araport" id="AT3G21190"/>
    </source>
</evidence>
<evidence type="ECO:0000312" key="6">
    <source>
        <dbReference type="EMBL" id="ARJ31429.1"/>
    </source>
</evidence>
<evidence type="ECO:0000312" key="7">
    <source>
        <dbReference type="EMBL" id="BAB01710.1"/>
    </source>
</evidence>
<feature type="chain" id="PRO_0000442087" description="Protein MANNAN SYNTHESIS-RELATED 1">
    <location>
        <begin position="1"/>
        <end position="422"/>
    </location>
</feature>
<feature type="topological domain" description="Cytoplasmic" evidence="4">
    <location>
        <begin position="1"/>
        <end position="6"/>
    </location>
</feature>
<feature type="transmembrane region" description="Helical; Signal-anchor for type II membrane protein" evidence="4">
    <location>
        <begin position="7"/>
        <end position="26"/>
    </location>
</feature>
<feature type="topological domain" description="Lumenal" evidence="4">
    <location>
        <begin position="27"/>
        <end position="422"/>
    </location>
</feature>
<feature type="binding site" evidence="1">
    <location>
        <begin position="263"/>
        <end position="265"/>
    </location>
    <ligand>
        <name>substrate</name>
    </ligand>
</feature>
<feature type="sequence conflict" description="In Ref. 6; AAM65575." evidence="4" ref="6">
    <original>S</original>
    <variation>A</variation>
    <location>
        <position position="214"/>
    </location>
</feature>
<feature type="sequence conflict" description="In Ref. 6; AAM65575." evidence="4" ref="6">
    <original>S</original>
    <variation>I</variation>
    <location>
        <position position="315"/>
    </location>
</feature>
<sequence length="422" mass="46799">MGVDLRQVVAGILTITMFVMLGQMLHRDYFDSLQEKAQGDAQDIEFEGSKVSVKDGLVGTVEGSKGLWMEDNTDLTPCWPTLLSDDAVSSKGYVTFSLTNGPEYHISQITDAVMVAKHLGATLVLPDIRGSKPGDERNFEDIYDADKLIKSLENVVKVVKKLPEEVSLRNMAIVKVPTRVTEDYIKEHIDPIFKSKGNIRVASYFPSVNLRKSSQDGETDPVACLAMFGSLELQPEVNAVAESMVERLRTHSRKSGGRFIAVDLRIDILEKKNCHTTGVVGSKTCYNAQEIALFLRKLGFASDTTIYLTQPRWDSSLNILKDIFPKTFTKEAIMPASKRSKYLESVSSEYENVIDFYISSRSDVFVPAISGLFYANTVGKRIALGKPQVLVPAEISETSGLATDFISPYISKKNHLAYSCFC</sequence>
<reference key="1">
    <citation type="submission" date="2017-04" db="EMBL/GenBank/DDBJ databases">
        <title>Arabidopsis glycosyltransferases: an update.</title>
        <authorList>
            <person name="Zeng W."/>
            <person name="Gluza P."/>
            <person name="Heazlewood J."/>
        </authorList>
    </citation>
    <scope>NUCLEOTIDE SEQUENCE [MRNA]</scope>
    <source>
        <strain>cv. Columbia</strain>
    </source>
</reference>
<reference key="2">
    <citation type="journal article" date="2000" name="DNA Res.">
        <title>Structural analysis of Arabidopsis thaliana chromosome 3. I. Sequence features of the regions of 4,504,864 bp covered by sixty P1 and TAC clones.</title>
        <authorList>
            <person name="Sato S."/>
            <person name="Nakamura Y."/>
            <person name="Kaneko T."/>
            <person name="Katoh T."/>
            <person name="Asamizu E."/>
            <person name="Tabata S."/>
        </authorList>
    </citation>
    <scope>NUCLEOTIDE SEQUENCE [LARGE SCALE GENOMIC DNA]</scope>
    <source>
        <strain>cv. Columbia</strain>
    </source>
</reference>
<reference key="3">
    <citation type="journal article" date="2017" name="Plant J.">
        <title>Araport11: a complete reannotation of the Arabidopsis thaliana reference genome.</title>
        <authorList>
            <person name="Cheng C.Y."/>
            <person name="Krishnakumar V."/>
            <person name="Chan A.P."/>
            <person name="Thibaud-Nissen F."/>
            <person name="Schobel S."/>
            <person name="Town C.D."/>
        </authorList>
    </citation>
    <scope>GENOME REANNOTATION</scope>
    <source>
        <strain>cv. Columbia</strain>
    </source>
</reference>
<reference key="4">
    <citation type="journal article" date="2003" name="Science">
        <title>Empirical analysis of transcriptional activity in the Arabidopsis genome.</title>
        <authorList>
            <person name="Yamada K."/>
            <person name="Lim J."/>
            <person name="Dale J.M."/>
            <person name="Chen H."/>
            <person name="Shinn P."/>
            <person name="Palm C.J."/>
            <person name="Southwick A.M."/>
            <person name="Wu H.C."/>
            <person name="Kim C.J."/>
            <person name="Nguyen M."/>
            <person name="Pham P.K."/>
            <person name="Cheuk R.F."/>
            <person name="Karlin-Newmann G."/>
            <person name="Liu S.X."/>
            <person name="Lam B."/>
            <person name="Sakano H."/>
            <person name="Wu T."/>
            <person name="Yu G."/>
            <person name="Miranda M."/>
            <person name="Quach H.L."/>
            <person name="Tripp M."/>
            <person name="Chang C.H."/>
            <person name="Lee J.M."/>
            <person name="Toriumi M.J."/>
            <person name="Chan M.M."/>
            <person name="Tang C.C."/>
            <person name="Onodera C.S."/>
            <person name="Deng J.M."/>
            <person name="Akiyama K."/>
            <person name="Ansari Y."/>
            <person name="Arakawa T."/>
            <person name="Banh J."/>
            <person name="Banno F."/>
            <person name="Bowser L."/>
            <person name="Brooks S.Y."/>
            <person name="Carninci P."/>
            <person name="Chao Q."/>
            <person name="Choy N."/>
            <person name="Enju A."/>
            <person name="Goldsmith A.D."/>
            <person name="Gurjal M."/>
            <person name="Hansen N.F."/>
            <person name="Hayashizaki Y."/>
            <person name="Johnson-Hopson C."/>
            <person name="Hsuan V.W."/>
            <person name="Iida K."/>
            <person name="Karnes M."/>
            <person name="Khan S."/>
            <person name="Koesema E."/>
            <person name="Ishida J."/>
            <person name="Jiang P.X."/>
            <person name="Jones T."/>
            <person name="Kawai J."/>
            <person name="Kamiya A."/>
            <person name="Meyers C."/>
            <person name="Nakajima M."/>
            <person name="Narusaka M."/>
            <person name="Seki M."/>
            <person name="Sakurai T."/>
            <person name="Satou M."/>
            <person name="Tamse R."/>
            <person name="Vaysberg M."/>
            <person name="Wallender E.K."/>
            <person name="Wong C."/>
            <person name="Yamamura Y."/>
            <person name="Yuan S."/>
            <person name="Shinozaki K."/>
            <person name="Davis R.W."/>
            <person name="Theologis A."/>
            <person name="Ecker J.R."/>
        </authorList>
    </citation>
    <scope>NUCLEOTIDE SEQUENCE [LARGE SCALE MRNA]</scope>
    <source>
        <strain>cv. Columbia</strain>
    </source>
</reference>
<reference key="5">
    <citation type="submission" date="2006-07" db="EMBL/GenBank/DDBJ databases">
        <title>Large-scale analysis of RIKEN Arabidopsis full-length (RAFL) cDNAs.</title>
        <authorList>
            <person name="Totoki Y."/>
            <person name="Seki M."/>
            <person name="Ishida J."/>
            <person name="Nakajima M."/>
            <person name="Enju A."/>
            <person name="Kamiya A."/>
            <person name="Narusaka M."/>
            <person name="Shin-i T."/>
            <person name="Nakagawa M."/>
            <person name="Sakamoto N."/>
            <person name="Oishi K."/>
            <person name="Kohara Y."/>
            <person name="Kobayashi M."/>
            <person name="Toyoda A."/>
            <person name="Sakaki Y."/>
            <person name="Sakurai T."/>
            <person name="Iida K."/>
            <person name="Akiyama K."/>
            <person name="Satou M."/>
            <person name="Toyoda T."/>
            <person name="Konagaya A."/>
            <person name="Carninci P."/>
            <person name="Kawai J."/>
            <person name="Hayashizaki Y."/>
            <person name="Shinozaki K."/>
        </authorList>
    </citation>
    <scope>NUCLEOTIDE SEQUENCE [LARGE SCALE MRNA]</scope>
    <source>
        <strain>cv. Columbia</strain>
    </source>
</reference>
<reference key="6">
    <citation type="submission" date="2002-03" db="EMBL/GenBank/DDBJ databases">
        <title>Full-length cDNA from Arabidopsis thaliana.</title>
        <authorList>
            <person name="Brover V.V."/>
            <person name="Troukhan M.E."/>
            <person name="Alexandrov N.A."/>
            <person name="Lu Y.-P."/>
            <person name="Flavell R.B."/>
            <person name="Feldmann K.A."/>
        </authorList>
    </citation>
    <scope>NUCLEOTIDE SEQUENCE [LARGE SCALE MRNA]</scope>
</reference>
<reference key="7">
    <citation type="journal article" date="2012" name="Front. Plant Sci.">
        <title>Plant glycosyltransferases beyond CAZy: a perspective on DUF families.</title>
        <authorList>
            <person name="Hansen S.F."/>
            <person name="Harholt J."/>
            <person name="Oikawa A."/>
            <person name="Scheller H.V."/>
        </authorList>
    </citation>
    <scope>REVIEW</scope>
</reference>
<reference key="8">
    <citation type="journal article" date="2012" name="PLoS ONE">
        <title>Identification of putative rhamnogalacturonan-II specific glycosyltransferases in Arabidopsis using a combination of bioinformatics approaches.</title>
        <authorList>
            <person name="Voxeur A."/>
            <person name="Andre A."/>
            <person name="Breton C."/>
            <person name="Lerouge P."/>
        </authorList>
    </citation>
    <scope>GENE FAMILY</scope>
</reference>
<reference key="9">
    <citation type="journal article" date="2013" name="Plant J.">
        <title>Identification of an additional protein involved in mannan biosynthesis.</title>
        <authorList>
            <person name="Wang Y."/>
            <person name="Mortimer J.C."/>
            <person name="Davis J."/>
            <person name="Dupree P."/>
            <person name="Keegstra K."/>
        </authorList>
    </citation>
    <scope>GENE FAMILY</scope>
    <scope>SUBCELLULAR LOCATION</scope>
    <scope>TISSUE SPECIFICITY</scope>
    <scope>FUNCTION</scope>
    <scope>DISRUPTION PHENOTYPE</scope>
</reference>
<reference key="10">
    <citation type="journal article" date="2014" name="Plant J.">
        <title>The plant glycosyltransferase clone collection for functional genomics.</title>
        <authorList>
            <person name="Lao J."/>
            <person name="Oikawa A."/>
            <person name="Bromley J.R."/>
            <person name="McInerney P."/>
            <person name="Suttangkakul A."/>
            <person name="Smith-Moritz A.M."/>
            <person name="Plahar H."/>
            <person name="Chiu T.-Y."/>
            <person name="Gonzalez Fernandez-Nino S.M.G."/>
            <person name="Ebert B."/>
            <person name="Yang F."/>
            <person name="Christiansen K.M."/>
            <person name="Hansen S.F."/>
            <person name="Stonebloom S."/>
            <person name="Adams P.D."/>
            <person name="Ronald P.C."/>
            <person name="Hillson N.J."/>
            <person name="Hadi M.Z."/>
            <person name="Vega-Sanchez M.E."/>
            <person name="Loque D."/>
            <person name="Scheller H.V."/>
            <person name="Heazlewood J.L."/>
        </authorList>
    </citation>
    <scope>WEB RESOURCE</scope>
</reference>
<name>MSR1_ARATH</name>
<organism>
    <name type="scientific">Arabidopsis thaliana</name>
    <name type="common">Mouse-ear cress</name>
    <dbReference type="NCBI Taxonomy" id="3702"/>
    <lineage>
        <taxon>Eukaryota</taxon>
        <taxon>Viridiplantae</taxon>
        <taxon>Streptophyta</taxon>
        <taxon>Embryophyta</taxon>
        <taxon>Tracheophyta</taxon>
        <taxon>Spermatophyta</taxon>
        <taxon>Magnoliopsida</taxon>
        <taxon>eudicotyledons</taxon>
        <taxon>Gunneridae</taxon>
        <taxon>Pentapetalae</taxon>
        <taxon>rosids</taxon>
        <taxon>malvids</taxon>
        <taxon>Brassicales</taxon>
        <taxon>Brassicaceae</taxon>
        <taxon>Camelineae</taxon>
        <taxon>Arabidopsis</taxon>
    </lineage>
</organism>
<dbReference type="EC" id="2.4.1.-" evidence="4"/>
<dbReference type="EMBL" id="KY906065">
    <property type="protein sequence ID" value="ARJ31429.1"/>
    <property type="molecule type" value="mRNA"/>
</dbReference>
<dbReference type="EMBL" id="AB023045">
    <property type="protein sequence ID" value="BAB01710.1"/>
    <property type="molecule type" value="Genomic_DNA"/>
</dbReference>
<dbReference type="EMBL" id="CP002686">
    <property type="protein sequence ID" value="AEE76474.1"/>
    <property type="molecule type" value="Genomic_DNA"/>
</dbReference>
<dbReference type="EMBL" id="BT005762">
    <property type="protein sequence ID" value="AAO64166.1"/>
    <property type="molecule type" value="mRNA"/>
</dbReference>
<dbReference type="EMBL" id="BT006084">
    <property type="protein sequence ID" value="AAP04069.1"/>
    <property type="molecule type" value="mRNA"/>
</dbReference>
<dbReference type="EMBL" id="AK228514">
    <property type="protein sequence ID" value="BAF00437.1"/>
    <property type="molecule type" value="mRNA"/>
</dbReference>
<dbReference type="EMBL" id="AY088029">
    <property type="protein sequence ID" value="AAM65575.1"/>
    <property type="molecule type" value="mRNA"/>
</dbReference>
<dbReference type="RefSeq" id="NP_566677.1">
    <property type="nucleotide sequence ID" value="NM_113014.4"/>
</dbReference>
<dbReference type="FunCoup" id="Q9LU40">
    <property type="interactions" value="858"/>
</dbReference>
<dbReference type="STRING" id="3702.Q9LU40"/>
<dbReference type="iPTMnet" id="Q9LU40"/>
<dbReference type="PaxDb" id="3702-AT3G21190.1"/>
<dbReference type="ProteomicsDB" id="250791"/>
<dbReference type="EnsemblPlants" id="AT3G21190.1">
    <property type="protein sequence ID" value="AT3G21190.1"/>
    <property type="gene ID" value="AT3G21190"/>
</dbReference>
<dbReference type="GeneID" id="821672"/>
<dbReference type="Gramene" id="AT3G21190.1">
    <property type="protein sequence ID" value="AT3G21190.1"/>
    <property type="gene ID" value="AT3G21190"/>
</dbReference>
<dbReference type="KEGG" id="ath:AT3G21190"/>
<dbReference type="Araport" id="AT3G21190"/>
<dbReference type="TAIR" id="AT3G21190">
    <property type="gene designation" value="MSR1"/>
</dbReference>
<dbReference type="eggNOG" id="ENOG502QUE8">
    <property type="taxonomic scope" value="Eukaryota"/>
</dbReference>
<dbReference type="HOGENOM" id="CLU_018420_3_0_1"/>
<dbReference type="InParanoid" id="Q9LU40"/>
<dbReference type="OMA" id="LWMEDNT"/>
<dbReference type="OrthoDB" id="1899018at2759"/>
<dbReference type="PhylomeDB" id="Q9LU40"/>
<dbReference type="PRO" id="PR:Q9LU40"/>
<dbReference type="Proteomes" id="UP000006548">
    <property type="component" value="Chromosome 3"/>
</dbReference>
<dbReference type="ExpressionAtlas" id="Q9LU40">
    <property type="expression patterns" value="baseline and differential"/>
</dbReference>
<dbReference type="GO" id="GO:0005768">
    <property type="term" value="C:endosome"/>
    <property type="evidence" value="ECO:0007005"/>
    <property type="project" value="TAIR"/>
</dbReference>
<dbReference type="GO" id="GO:0005794">
    <property type="term" value="C:Golgi apparatus"/>
    <property type="evidence" value="ECO:0000314"/>
    <property type="project" value="UniProtKB"/>
</dbReference>
<dbReference type="GO" id="GO:0005797">
    <property type="term" value="C:Golgi medial cisterna"/>
    <property type="evidence" value="ECO:0007005"/>
    <property type="project" value="TAIR"/>
</dbReference>
<dbReference type="GO" id="GO:0000139">
    <property type="term" value="C:Golgi membrane"/>
    <property type="evidence" value="ECO:0007669"/>
    <property type="project" value="UniProtKB-SubCell"/>
</dbReference>
<dbReference type="GO" id="GO:0005802">
    <property type="term" value="C:trans-Golgi network"/>
    <property type="evidence" value="ECO:0007005"/>
    <property type="project" value="TAIR"/>
</dbReference>
<dbReference type="GO" id="GO:0051753">
    <property type="term" value="F:mannan synthase activity"/>
    <property type="evidence" value="ECO:0000315"/>
    <property type="project" value="UniProtKB"/>
</dbReference>
<dbReference type="GO" id="GO:0052325">
    <property type="term" value="P:cell wall pectin biosynthetic process"/>
    <property type="evidence" value="ECO:0000315"/>
    <property type="project" value="UniProtKB"/>
</dbReference>
<dbReference type="GO" id="GO:0006004">
    <property type="term" value="P:fucose metabolic process"/>
    <property type="evidence" value="ECO:0007669"/>
    <property type="project" value="UniProtKB-KW"/>
</dbReference>
<dbReference type="GO" id="GO:0010412">
    <property type="term" value="P:mannan metabolic process"/>
    <property type="evidence" value="ECO:0000315"/>
    <property type="project" value="UniProtKB"/>
</dbReference>
<dbReference type="GO" id="GO:0097502">
    <property type="term" value="P:mannosylation"/>
    <property type="evidence" value="ECO:0000315"/>
    <property type="project" value="UniProtKB"/>
</dbReference>
<dbReference type="CDD" id="cd11299">
    <property type="entry name" value="O-FucT_plant"/>
    <property type="match status" value="1"/>
</dbReference>
<dbReference type="Gene3D" id="3.40.50.11350">
    <property type="match status" value="1"/>
</dbReference>
<dbReference type="InterPro" id="IPR024709">
    <property type="entry name" value="FucosylTrfase_pln"/>
</dbReference>
<dbReference type="InterPro" id="IPR019378">
    <property type="entry name" value="GDP-Fuc_O-FucTrfase"/>
</dbReference>
<dbReference type="PANTHER" id="PTHR31288">
    <property type="entry name" value="O-FUCOSYLTRANSFERASE FAMILY PROTEIN"/>
    <property type="match status" value="1"/>
</dbReference>
<dbReference type="PANTHER" id="PTHR31288:SF5">
    <property type="entry name" value="PROTEIN MANNAN SYNTHESIS-RELATED 1"/>
    <property type="match status" value="1"/>
</dbReference>
<dbReference type="Pfam" id="PF10250">
    <property type="entry name" value="O-FucT"/>
    <property type="match status" value="1"/>
</dbReference>
<dbReference type="PIRSF" id="PIRSF009360">
    <property type="entry name" value="UCP009360"/>
    <property type="match status" value="1"/>
</dbReference>
<keyword id="KW-0119">Carbohydrate metabolism</keyword>
<keyword id="KW-0961">Cell wall biogenesis/degradation</keyword>
<keyword id="KW-0294">Fucose metabolism</keyword>
<keyword id="KW-0328">Glycosyltransferase</keyword>
<keyword id="KW-0333">Golgi apparatus</keyword>
<keyword id="KW-0472">Membrane</keyword>
<keyword id="KW-1185">Reference proteome</keyword>
<keyword id="KW-0735">Signal-anchor</keyword>
<keyword id="KW-0808">Transferase</keyword>
<keyword id="KW-0812">Transmembrane</keyword>
<keyword id="KW-1133">Transmembrane helix</keyword>